<sequence>MAPMKLYGSTLSWNVTRCVAVLEEAGAEYEIVPLDFSKGEHKAPDHLARNPFGQVPALQDGDLFLWESRAICKYVCRKNKPELLKDGDLKESAMVDVWLEVESNQYTPALNPILFQCLIRPMMFGAPPDEKVVEENLEKLKKVLEVYEARLTKCKYLAGDYISVADLSHVAGTVCLGATPHASVLDAYPHVKAWWTDLMARPSSQKVASLMKPPA</sequence>
<accession>O82451</accession>
<accession>O65858</accession>
<accession>Q7F5M8</accession>
<gene>
    <name type="primary">GSTF2</name>
    <name type="synonym">RGST II</name>
    <name type="ordered locus">Os01g0764000</name>
    <name type="ordered locus">LOC_Os01g55830</name>
    <name type="ORF">P0403C05.5</name>
</gene>
<evidence type="ECO:0000250" key="1"/>
<evidence type="ECO:0000269" key="2">
    <source>
    </source>
</evidence>
<evidence type="ECO:0000269" key="3">
    <source>
    </source>
</evidence>
<evidence type="ECO:0000269" key="4">
    <source ref="8"/>
</evidence>
<evidence type="ECO:0000305" key="5"/>
<feature type="initiator methionine" description="Removed" evidence="2">
    <location>
        <position position="1"/>
    </location>
</feature>
<feature type="chain" id="PRO_0000185845" description="Probable glutathione S-transferase GSTF2">
    <location>
        <begin position="2"/>
        <end position="215"/>
    </location>
</feature>
<feature type="domain" description="GST N-terminal">
    <location>
        <begin position="2"/>
        <end position="83"/>
    </location>
</feature>
<feature type="domain" description="GST C-terminal">
    <location>
        <begin position="88"/>
        <end position="215"/>
    </location>
</feature>
<feature type="binding site" evidence="1">
    <location>
        <position position="12"/>
    </location>
    <ligand>
        <name>glutathione</name>
        <dbReference type="ChEBI" id="CHEBI:57925"/>
    </ligand>
</feature>
<feature type="binding site" evidence="1">
    <location>
        <begin position="41"/>
        <end position="42"/>
    </location>
    <ligand>
        <name>glutathione</name>
        <dbReference type="ChEBI" id="CHEBI:57925"/>
    </ligand>
</feature>
<feature type="binding site" evidence="1">
    <location>
        <begin position="54"/>
        <end position="55"/>
    </location>
    <ligand>
        <name>glutathione</name>
        <dbReference type="ChEBI" id="CHEBI:57925"/>
    </ligand>
</feature>
<feature type="binding site" evidence="1">
    <location>
        <begin position="67"/>
        <end position="68"/>
    </location>
    <ligand>
        <name>glutathione</name>
        <dbReference type="ChEBI" id="CHEBI:57925"/>
    </ligand>
</feature>
<feature type="sequence conflict" description="In Ref. 7; CAA05355." evidence="5" ref="7">
    <original>H</original>
    <variation>Q</variation>
    <location>
        <position position="190"/>
    </location>
</feature>
<reference key="1">
    <citation type="online journal article" date="1998" name="Plant Gene Register">
        <title>Isolation of a full-length cDNA encoding the second glutathione S-transferase from rice (Oryza sativa).</title>
        <authorList>
            <person name="Wu J."/>
            <person name="Cramer C."/>
            <person name="Hatzios K.K."/>
        </authorList>
        <locator>PGR98-136</locator>
    </citation>
    <scope>NUCLEOTIDE SEQUENCE [MRNA]</scope>
    <source>
        <strain>cv. Lemont</strain>
        <tissue>Root</tissue>
    </source>
</reference>
<reference key="2">
    <citation type="journal article" date="2002" name="Nature">
        <title>The genome sequence and structure of rice chromosome 1.</title>
        <authorList>
            <person name="Sasaki T."/>
            <person name="Matsumoto T."/>
            <person name="Yamamoto K."/>
            <person name="Sakata K."/>
            <person name="Baba T."/>
            <person name="Katayose Y."/>
            <person name="Wu J."/>
            <person name="Niimura Y."/>
            <person name="Cheng Z."/>
            <person name="Nagamura Y."/>
            <person name="Antonio B.A."/>
            <person name="Kanamori H."/>
            <person name="Hosokawa S."/>
            <person name="Masukawa M."/>
            <person name="Arikawa K."/>
            <person name="Chiden Y."/>
            <person name="Hayashi M."/>
            <person name="Okamoto M."/>
            <person name="Ando T."/>
            <person name="Aoki H."/>
            <person name="Arita K."/>
            <person name="Hamada M."/>
            <person name="Harada C."/>
            <person name="Hijishita S."/>
            <person name="Honda M."/>
            <person name="Ichikawa Y."/>
            <person name="Idonuma A."/>
            <person name="Iijima M."/>
            <person name="Ikeda M."/>
            <person name="Ikeno M."/>
            <person name="Ito S."/>
            <person name="Ito T."/>
            <person name="Ito Y."/>
            <person name="Ito Y."/>
            <person name="Iwabuchi A."/>
            <person name="Kamiya K."/>
            <person name="Karasawa W."/>
            <person name="Katagiri S."/>
            <person name="Kikuta A."/>
            <person name="Kobayashi N."/>
            <person name="Kono I."/>
            <person name="Machita K."/>
            <person name="Maehara T."/>
            <person name="Mizuno H."/>
            <person name="Mizubayashi T."/>
            <person name="Mukai Y."/>
            <person name="Nagasaki H."/>
            <person name="Nakashima M."/>
            <person name="Nakama Y."/>
            <person name="Nakamichi Y."/>
            <person name="Nakamura M."/>
            <person name="Namiki N."/>
            <person name="Negishi M."/>
            <person name="Ohta I."/>
            <person name="Ono N."/>
            <person name="Saji S."/>
            <person name="Sakai K."/>
            <person name="Shibata M."/>
            <person name="Shimokawa T."/>
            <person name="Shomura A."/>
            <person name="Song J."/>
            <person name="Takazaki Y."/>
            <person name="Terasawa K."/>
            <person name="Tsuji K."/>
            <person name="Waki K."/>
            <person name="Yamagata H."/>
            <person name="Yamane H."/>
            <person name="Yoshiki S."/>
            <person name="Yoshihara R."/>
            <person name="Yukawa K."/>
            <person name="Zhong H."/>
            <person name="Iwama H."/>
            <person name="Endo T."/>
            <person name="Ito H."/>
            <person name="Hahn J.H."/>
            <person name="Kim H.-I."/>
            <person name="Eun M.-Y."/>
            <person name="Yano M."/>
            <person name="Jiang J."/>
            <person name="Gojobori T."/>
        </authorList>
    </citation>
    <scope>NUCLEOTIDE SEQUENCE [LARGE SCALE GENOMIC DNA]</scope>
    <source>
        <strain>cv. Nipponbare</strain>
    </source>
</reference>
<reference key="3">
    <citation type="journal article" date="2005" name="Nature">
        <title>The map-based sequence of the rice genome.</title>
        <authorList>
            <consortium name="International rice genome sequencing project (IRGSP)"/>
        </authorList>
    </citation>
    <scope>NUCLEOTIDE SEQUENCE [LARGE SCALE GENOMIC DNA]</scope>
    <source>
        <strain>cv. Nipponbare</strain>
    </source>
</reference>
<reference key="4">
    <citation type="journal article" date="2013" name="Rice">
        <title>Improvement of the Oryza sativa Nipponbare reference genome using next generation sequence and optical map data.</title>
        <authorList>
            <person name="Kawahara Y."/>
            <person name="de la Bastide M."/>
            <person name="Hamilton J.P."/>
            <person name="Kanamori H."/>
            <person name="McCombie W.R."/>
            <person name="Ouyang S."/>
            <person name="Schwartz D.C."/>
            <person name="Tanaka T."/>
            <person name="Wu J."/>
            <person name="Zhou S."/>
            <person name="Childs K.L."/>
            <person name="Davidson R.M."/>
            <person name="Lin H."/>
            <person name="Quesada-Ocampo L."/>
            <person name="Vaillancourt B."/>
            <person name="Sakai H."/>
            <person name="Lee S.S."/>
            <person name="Kim J."/>
            <person name="Numa H."/>
            <person name="Itoh T."/>
            <person name="Buell C.R."/>
            <person name="Matsumoto T."/>
        </authorList>
    </citation>
    <scope>GENOME REANNOTATION</scope>
    <source>
        <strain>cv. Nipponbare</strain>
    </source>
</reference>
<reference key="5">
    <citation type="journal article" date="2003" name="Science">
        <title>Collection, mapping, and annotation of over 28,000 cDNA clones from japonica rice.</title>
        <authorList>
            <consortium name="The rice full-length cDNA consortium"/>
        </authorList>
    </citation>
    <scope>NUCLEOTIDE SEQUENCE [LARGE SCALE MRNA]</scope>
    <source>
        <strain>cv. Nipponbare</strain>
    </source>
</reference>
<reference key="6">
    <citation type="journal article" date="2004" name="Nucleic Acids Res.">
        <title>Rice proteome database based on two-dimensional polyacrylamide gel electrophoresis: its status in 2003.</title>
        <authorList>
            <person name="Komatsu S."/>
            <person name="Kojima K."/>
            <person name="Suzuki K."/>
            <person name="Ozaki K."/>
            <person name="Higo K."/>
        </authorList>
    </citation>
    <scope>PROTEIN SEQUENCE OF 2-11</scope>
    <scope>TISSUE SPECIFICITY</scope>
    <source>
        <strain>cv. Nipponbare</strain>
        <tissue>Anther</tissue>
        <tissue>Callus</tissue>
        <tissue>Panicle</tissue>
        <tissue>Root</tissue>
        <tissue>Sheath</tissue>
        <tissue>Stem</tissue>
    </source>
</reference>
<reference key="7">
    <citation type="online journal article" date="1998" name="Plant Gene Register">
        <title>Nucleotide sequence of a cDNA encoding the second glutathione S-transferase from rice (Oryza sativa).</title>
        <authorList>
            <person name="Wu J."/>
            <person name="Cramer C."/>
            <person name="Hatzios K.K."/>
        </authorList>
        <locator>PGR98-119</locator>
    </citation>
    <scope>NUCLEOTIDE SEQUENCE [MRNA] OF 50-195</scope>
    <source>
        <strain>cv. Lemont</strain>
    </source>
</reference>
<reference key="8">
    <citation type="journal article" date="1999" name="Physiol. Plantarum">
        <title>Characterization of two cDNAs encoding glutathione S-transferases in rice and induction of their transcripts by the herbicide safener fenclorim.</title>
        <authorList>
            <person name="Wu J."/>
            <person name="Cramer C."/>
            <person name="Hatzios K.K."/>
        </authorList>
    </citation>
    <scope>CHARACTERIZATION</scope>
    <scope>TISSUE SPECIFICITY</scope>
    <scope>INDUCTION</scope>
    <source>
        <strain>cv. Lemont</strain>
    </source>
</reference>
<reference key="9">
    <citation type="journal article" date="2004" name="Mol. Genet. Genomics">
        <title>Organisation and structural evolution of the rice glutathione S-transferase gene family.</title>
        <authorList>
            <person name="Soranzo N."/>
            <person name="Sari Gorla M."/>
            <person name="Mizzi L."/>
            <person name="De Toma G."/>
            <person name="Frova C."/>
        </authorList>
    </citation>
    <scope>NOMENCLATURE</scope>
    <scope>INDUCTION</scope>
</reference>
<keyword id="KW-0903">Direct protein sequencing</keyword>
<keyword id="KW-1185">Reference proteome</keyword>
<keyword id="KW-0808">Transferase</keyword>
<comment type="function">
    <text>Conjugation of reduced glutathione to a wide number of exogenous and endogenous hydrophobic electrophiles.</text>
</comment>
<comment type="catalytic activity">
    <reaction>
        <text>RX + glutathione = an S-substituted glutathione + a halide anion + H(+)</text>
        <dbReference type="Rhea" id="RHEA:16437"/>
        <dbReference type="ChEBI" id="CHEBI:15378"/>
        <dbReference type="ChEBI" id="CHEBI:16042"/>
        <dbReference type="ChEBI" id="CHEBI:17792"/>
        <dbReference type="ChEBI" id="CHEBI:57925"/>
        <dbReference type="ChEBI" id="CHEBI:90779"/>
        <dbReference type="EC" id="2.5.1.18"/>
    </reaction>
</comment>
<comment type="tissue specificity">
    <text evidence="2 4">Constitutively expressed in roots. Expressed in anthers, callus, panicles, sheaths and stems (at protein level).</text>
</comment>
<comment type="induction">
    <text evidence="3 4">By the herbicide safener fenclorim. By drought stress.</text>
</comment>
<comment type="similarity">
    <text evidence="5">Belongs to the GST superfamily. Phi family.</text>
</comment>
<dbReference type="EC" id="2.5.1.18"/>
<dbReference type="EMBL" id="AF062403">
    <property type="protein sequence ID" value="AAC64007.1"/>
    <property type="molecule type" value="mRNA"/>
</dbReference>
<dbReference type="EMBL" id="AP003239">
    <property type="protein sequence ID" value="BAB63585.1"/>
    <property type="molecule type" value="Genomic_DNA"/>
</dbReference>
<dbReference type="EMBL" id="AP014957">
    <property type="protein sequence ID" value="BAS74483.1"/>
    <property type="molecule type" value="Genomic_DNA"/>
</dbReference>
<dbReference type="EMBL" id="AK058894">
    <property type="status" value="NOT_ANNOTATED_CDS"/>
    <property type="molecule type" value="mRNA"/>
</dbReference>
<dbReference type="EMBL" id="AK059818">
    <property type="status" value="NOT_ANNOTATED_CDS"/>
    <property type="molecule type" value="mRNA"/>
</dbReference>
<dbReference type="EMBL" id="AK099142">
    <property type="status" value="NOT_ANNOTATED_CDS"/>
    <property type="molecule type" value="mRNA"/>
</dbReference>
<dbReference type="EMBL" id="AJ002381">
    <property type="protein sequence ID" value="CAA05355.1"/>
    <property type="molecule type" value="mRNA"/>
</dbReference>
<dbReference type="PIR" id="T03989">
    <property type="entry name" value="T03989"/>
</dbReference>
<dbReference type="RefSeq" id="XP_015614423.1">
    <property type="nucleotide sequence ID" value="XM_015758937.1"/>
</dbReference>
<dbReference type="SMR" id="O82451"/>
<dbReference type="BioGRID" id="795924">
    <property type="interactions" value="1"/>
</dbReference>
<dbReference type="FunCoup" id="O82451">
    <property type="interactions" value="987"/>
</dbReference>
<dbReference type="STRING" id="39947.O82451"/>
<dbReference type="PaxDb" id="39947-O82451"/>
<dbReference type="EnsemblPlants" id="Os01t0764000-01">
    <property type="protein sequence ID" value="Os01t0764000-01"/>
    <property type="gene ID" value="Os01g0764000"/>
</dbReference>
<dbReference type="EnsemblPlants" id="Os01t0764000-03">
    <property type="protein sequence ID" value="Os01t0764000-03"/>
    <property type="gene ID" value="Os01g0764000"/>
</dbReference>
<dbReference type="Gramene" id="Os01t0764000-01">
    <property type="protein sequence ID" value="Os01t0764000-01"/>
    <property type="gene ID" value="Os01g0764000"/>
</dbReference>
<dbReference type="Gramene" id="Os01t0764000-03">
    <property type="protein sequence ID" value="Os01t0764000-03"/>
    <property type="gene ID" value="Os01g0764000"/>
</dbReference>
<dbReference type="eggNOG" id="KOG0867">
    <property type="taxonomic scope" value="Eukaryota"/>
</dbReference>
<dbReference type="HOGENOM" id="CLU_011226_5_1_1"/>
<dbReference type="InParanoid" id="O82451"/>
<dbReference type="OMA" id="DEGCIWD"/>
<dbReference type="OrthoDB" id="422574at2759"/>
<dbReference type="Proteomes" id="UP000000763">
    <property type="component" value="Chromosome 1"/>
</dbReference>
<dbReference type="Proteomes" id="UP000059680">
    <property type="component" value="Chromosome 1"/>
</dbReference>
<dbReference type="ExpressionAtlas" id="O82451">
    <property type="expression patterns" value="baseline and differential"/>
</dbReference>
<dbReference type="GO" id="GO:0005737">
    <property type="term" value="C:cytoplasm"/>
    <property type="evidence" value="ECO:0000318"/>
    <property type="project" value="GO_Central"/>
</dbReference>
<dbReference type="GO" id="GO:0043295">
    <property type="term" value="F:glutathione binding"/>
    <property type="evidence" value="ECO:0000318"/>
    <property type="project" value="GO_Central"/>
</dbReference>
<dbReference type="GO" id="GO:0004364">
    <property type="term" value="F:glutathione transferase activity"/>
    <property type="evidence" value="ECO:0000318"/>
    <property type="project" value="GO_Central"/>
</dbReference>
<dbReference type="GO" id="GO:0006749">
    <property type="term" value="P:glutathione metabolic process"/>
    <property type="evidence" value="ECO:0000318"/>
    <property type="project" value="GO_Central"/>
</dbReference>
<dbReference type="GO" id="GO:0009636">
    <property type="term" value="P:response to toxic substance"/>
    <property type="evidence" value="ECO:0007669"/>
    <property type="project" value="UniProtKB-ARBA"/>
</dbReference>
<dbReference type="CDD" id="cd03187">
    <property type="entry name" value="GST_C_Phi"/>
    <property type="match status" value="1"/>
</dbReference>
<dbReference type="CDD" id="cd03053">
    <property type="entry name" value="GST_N_Phi"/>
    <property type="match status" value="1"/>
</dbReference>
<dbReference type="FunFam" id="1.20.1050.10:FF:000004">
    <property type="entry name" value="Glutathione S-transferase F2"/>
    <property type="match status" value="1"/>
</dbReference>
<dbReference type="FunFam" id="3.40.30.10:FF:000016">
    <property type="entry name" value="Glutathione S-transferase F2"/>
    <property type="match status" value="1"/>
</dbReference>
<dbReference type="Gene3D" id="1.20.1050.10">
    <property type="match status" value="1"/>
</dbReference>
<dbReference type="Gene3D" id="3.40.30.10">
    <property type="entry name" value="Glutaredoxin"/>
    <property type="match status" value="1"/>
</dbReference>
<dbReference type="InterPro" id="IPR010987">
    <property type="entry name" value="Glutathione-S-Trfase_C-like"/>
</dbReference>
<dbReference type="InterPro" id="IPR036282">
    <property type="entry name" value="Glutathione-S-Trfase_C_sf"/>
</dbReference>
<dbReference type="InterPro" id="IPR040079">
    <property type="entry name" value="Glutathione_S-Trfase"/>
</dbReference>
<dbReference type="InterPro" id="IPR004045">
    <property type="entry name" value="Glutathione_S-Trfase_N"/>
</dbReference>
<dbReference type="InterPro" id="IPR004046">
    <property type="entry name" value="GST_C"/>
</dbReference>
<dbReference type="InterPro" id="IPR034347">
    <property type="entry name" value="GST_Phi_C"/>
</dbReference>
<dbReference type="InterPro" id="IPR036249">
    <property type="entry name" value="Thioredoxin-like_sf"/>
</dbReference>
<dbReference type="PANTHER" id="PTHR43900:SF39">
    <property type="entry name" value="GLUTATHIONE S-TRANSFERASE GSTF2-RELATED"/>
    <property type="match status" value="1"/>
</dbReference>
<dbReference type="PANTHER" id="PTHR43900">
    <property type="entry name" value="GLUTATHIONE S-TRANSFERASE RHO"/>
    <property type="match status" value="1"/>
</dbReference>
<dbReference type="Pfam" id="PF00043">
    <property type="entry name" value="GST_C"/>
    <property type="match status" value="1"/>
</dbReference>
<dbReference type="Pfam" id="PF02798">
    <property type="entry name" value="GST_N"/>
    <property type="match status" value="1"/>
</dbReference>
<dbReference type="SFLD" id="SFLDS00019">
    <property type="entry name" value="Glutathione_Transferase_(cytos"/>
    <property type="match status" value="1"/>
</dbReference>
<dbReference type="SFLD" id="SFLDG01154">
    <property type="entry name" value="Main.5:_Phi-like"/>
    <property type="match status" value="1"/>
</dbReference>
<dbReference type="SUPFAM" id="SSF47616">
    <property type="entry name" value="GST C-terminal domain-like"/>
    <property type="match status" value="1"/>
</dbReference>
<dbReference type="SUPFAM" id="SSF52833">
    <property type="entry name" value="Thioredoxin-like"/>
    <property type="match status" value="1"/>
</dbReference>
<dbReference type="PROSITE" id="PS50405">
    <property type="entry name" value="GST_CTER"/>
    <property type="match status" value="1"/>
</dbReference>
<dbReference type="PROSITE" id="PS50404">
    <property type="entry name" value="GST_NTER"/>
    <property type="match status" value="1"/>
</dbReference>
<organism>
    <name type="scientific">Oryza sativa subsp. japonica</name>
    <name type="common">Rice</name>
    <dbReference type="NCBI Taxonomy" id="39947"/>
    <lineage>
        <taxon>Eukaryota</taxon>
        <taxon>Viridiplantae</taxon>
        <taxon>Streptophyta</taxon>
        <taxon>Embryophyta</taxon>
        <taxon>Tracheophyta</taxon>
        <taxon>Spermatophyta</taxon>
        <taxon>Magnoliopsida</taxon>
        <taxon>Liliopsida</taxon>
        <taxon>Poales</taxon>
        <taxon>Poaceae</taxon>
        <taxon>BOP clade</taxon>
        <taxon>Oryzoideae</taxon>
        <taxon>Oryzeae</taxon>
        <taxon>Oryzinae</taxon>
        <taxon>Oryza</taxon>
        <taxon>Oryza sativa</taxon>
    </lineage>
</organism>
<proteinExistence type="evidence at protein level"/>
<protein>
    <recommendedName>
        <fullName>Probable glutathione S-transferase GSTF2</fullName>
        <ecNumber>2.5.1.18</ecNumber>
    </recommendedName>
    <alternativeName>
        <fullName>GST-II</fullName>
    </alternativeName>
</protein>
<name>GSTF2_ORYSJ</name>